<accession>O30153</accession>
<name>Y083_ARCFU</name>
<organism>
    <name type="scientific">Archaeoglobus fulgidus (strain ATCC 49558 / DSM 4304 / JCM 9628 / NBRC 100126 / VC-16)</name>
    <dbReference type="NCBI Taxonomy" id="224325"/>
    <lineage>
        <taxon>Archaea</taxon>
        <taxon>Methanobacteriati</taxon>
        <taxon>Methanobacteriota</taxon>
        <taxon>Archaeoglobi</taxon>
        <taxon>Archaeoglobales</taxon>
        <taxon>Archaeoglobaceae</taxon>
        <taxon>Archaeoglobus</taxon>
    </lineage>
</organism>
<feature type="chain" id="PRO_0000127824" description="Uncharacterized protein AF_0083">
    <location>
        <begin position="1"/>
        <end position="61"/>
    </location>
</feature>
<gene>
    <name type="ordered locus">AF_0083</name>
</gene>
<proteinExistence type="predicted"/>
<dbReference type="EMBL" id="AE000782">
    <property type="protein sequence ID" value="AAB91149.1"/>
    <property type="molecule type" value="Genomic_DNA"/>
</dbReference>
<dbReference type="PIR" id="C69260">
    <property type="entry name" value="C69260"/>
</dbReference>
<dbReference type="STRING" id="224325.AF_0083"/>
<dbReference type="PaxDb" id="224325-AF_0083"/>
<dbReference type="EnsemblBacteria" id="AAB91149">
    <property type="protein sequence ID" value="AAB91149"/>
    <property type="gene ID" value="AF_0083"/>
</dbReference>
<dbReference type="KEGG" id="afu:AF_0083"/>
<dbReference type="eggNOG" id="arCOG12192">
    <property type="taxonomic scope" value="Archaea"/>
</dbReference>
<dbReference type="HOGENOM" id="CLU_2968248_0_0_2"/>
<dbReference type="OrthoDB" id="373416at2157"/>
<dbReference type="Proteomes" id="UP000002199">
    <property type="component" value="Chromosome"/>
</dbReference>
<keyword id="KW-1185">Reference proteome</keyword>
<protein>
    <recommendedName>
        <fullName>Uncharacterized protein AF_0083</fullName>
    </recommendedName>
</protein>
<sequence length="61" mass="7053">MRAMSSQRIEGEKIRCVGRRISKPRLIHQTGKHRAIEIFVEGRPAKAEVVRAWRVLKTAED</sequence>
<reference key="1">
    <citation type="journal article" date="1997" name="Nature">
        <title>The complete genome sequence of the hyperthermophilic, sulphate-reducing archaeon Archaeoglobus fulgidus.</title>
        <authorList>
            <person name="Klenk H.-P."/>
            <person name="Clayton R.A."/>
            <person name="Tomb J.-F."/>
            <person name="White O."/>
            <person name="Nelson K.E."/>
            <person name="Ketchum K.A."/>
            <person name="Dodson R.J."/>
            <person name="Gwinn M.L."/>
            <person name="Hickey E.K."/>
            <person name="Peterson J.D."/>
            <person name="Richardson D.L."/>
            <person name="Kerlavage A.R."/>
            <person name="Graham D.E."/>
            <person name="Kyrpides N.C."/>
            <person name="Fleischmann R.D."/>
            <person name="Quackenbush J."/>
            <person name="Lee N.H."/>
            <person name="Sutton G.G."/>
            <person name="Gill S.R."/>
            <person name="Kirkness E.F."/>
            <person name="Dougherty B.A."/>
            <person name="McKenney K."/>
            <person name="Adams M.D."/>
            <person name="Loftus B.J."/>
            <person name="Peterson S.N."/>
            <person name="Reich C.I."/>
            <person name="McNeil L.K."/>
            <person name="Badger J.H."/>
            <person name="Glodek A."/>
            <person name="Zhou L."/>
            <person name="Overbeek R."/>
            <person name="Gocayne J.D."/>
            <person name="Weidman J.F."/>
            <person name="McDonald L.A."/>
            <person name="Utterback T.R."/>
            <person name="Cotton M.D."/>
            <person name="Spriggs T."/>
            <person name="Artiach P."/>
            <person name="Kaine B.P."/>
            <person name="Sykes S.M."/>
            <person name="Sadow P.W."/>
            <person name="D'Andrea K.P."/>
            <person name="Bowman C."/>
            <person name="Fujii C."/>
            <person name="Garland S.A."/>
            <person name="Mason T.M."/>
            <person name="Olsen G.J."/>
            <person name="Fraser C.M."/>
            <person name="Smith H.O."/>
            <person name="Woese C.R."/>
            <person name="Venter J.C."/>
        </authorList>
    </citation>
    <scope>NUCLEOTIDE SEQUENCE [LARGE SCALE GENOMIC DNA]</scope>
    <source>
        <strain>ATCC 49558 / DSM 4304 / JCM 9628 / NBRC 100126 / VC-16</strain>
    </source>
</reference>